<protein>
    <recommendedName>
        <fullName evidence="1">tRNA (guanine-N(1)-)-methyltransferase</fullName>
        <ecNumber evidence="1">2.1.1.228</ecNumber>
    </recommendedName>
    <alternativeName>
        <fullName evidence="1">M1G-methyltransferase</fullName>
    </alternativeName>
    <alternativeName>
        <fullName evidence="1">tRNA [GM37] methyltransferase</fullName>
    </alternativeName>
</protein>
<reference key="1">
    <citation type="journal article" date="2008" name="J. Bacteriol.">
        <title>Comparative genome sequence analysis of multidrug-resistant Acinetobacter baumannii.</title>
        <authorList>
            <person name="Adams M.D."/>
            <person name="Goglin K."/>
            <person name="Molyneaux N."/>
            <person name="Hujer K.M."/>
            <person name="Lavender H."/>
            <person name="Jamison J.J."/>
            <person name="MacDonald I.J."/>
            <person name="Martin K.M."/>
            <person name="Russo T."/>
            <person name="Campagnari A.A."/>
            <person name="Hujer A.M."/>
            <person name="Bonomo R.A."/>
            <person name="Gill S.R."/>
        </authorList>
    </citation>
    <scope>NUCLEOTIDE SEQUENCE [LARGE SCALE GENOMIC DNA]</scope>
    <source>
        <strain>AB307-0294</strain>
    </source>
</reference>
<evidence type="ECO:0000255" key="1">
    <source>
        <dbReference type="HAMAP-Rule" id="MF_00605"/>
    </source>
</evidence>
<comment type="function">
    <text evidence="1">Specifically methylates guanosine-37 in various tRNAs.</text>
</comment>
<comment type="catalytic activity">
    <reaction evidence="1">
        <text>guanosine(37) in tRNA + S-adenosyl-L-methionine = N(1)-methylguanosine(37) in tRNA + S-adenosyl-L-homocysteine + H(+)</text>
        <dbReference type="Rhea" id="RHEA:36899"/>
        <dbReference type="Rhea" id="RHEA-COMP:10145"/>
        <dbReference type="Rhea" id="RHEA-COMP:10147"/>
        <dbReference type="ChEBI" id="CHEBI:15378"/>
        <dbReference type="ChEBI" id="CHEBI:57856"/>
        <dbReference type="ChEBI" id="CHEBI:59789"/>
        <dbReference type="ChEBI" id="CHEBI:73542"/>
        <dbReference type="ChEBI" id="CHEBI:74269"/>
        <dbReference type="EC" id="2.1.1.228"/>
    </reaction>
</comment>
<comment type="subunit">
    <text evidence="1">Homodimer.</text>
</comment>
<comment type="subcellular location">
    <subcellularLocation>
        <location evidence="1">Cytoplasm</location>
    </subcellularLocation>
</comment>
<comment type="similarity">
    <text evidence="1">Belongs to the RNA methyltransferase TrmD family.</text>
</comment>
<organism>
    <name type="scientific">Acinetobacter baumannii (strain AB307-0294)</name>
    <dbReference type="NCBI Taxonomy" id="557600"/>
    <lineage>
        <taxon>Bacteria</taxon>
        <taxon>Pseudomonadati</taxon>
        <taxon>Pseudomonadota</taxon>
        <taxon>Gammaproteobacteria</taxon>
        <taxon>Moraxellales</taxon>
        <taxon>Moraxellaceae</taxon>
        <taxon>Acinetobacter</taxon>
        <taxon>Acinetobacter calcoaceticus/baumannii complex</taxon>
    </lineage>
</organism>
<feature type="chain" id="PRO_1000130118" description="tRNA (guanine-N(1)-)-methyltransferase">
    <location>
        <begin position="1"/>
        <end position="246"/>
    </location>
</feature>
<feature type="binding site" evidence="1">
    <location>
        <position position="117"/>
    </location>
    <ligand>
        <name>S-adenosyl-L-methionine</name>
        <dbReference type="ChEBI" id="CHEBI:59789"/>
    </ligand>
</feature>
<feature type="binding site" evidence="1">
    <location>
        <begin position="137"/>
        <end position="142"/>
    </location>
    <ligand>
        <name>S-adenosyl-L-methionine</name>
        <dbReference type="ChEBI" id="CHEBI:59789"/>
    </ligand>
</feature>
<keyword id="KW-0963">Cytoplasm</keyword>
<keyword id="KW-0489">Methyltransferase</keyword>
<keyword id="KW-0949">S-adenosyl-L-methionine</keyword>
<keyword id="KW-0808">Transferase</keyword>
<keyword id="KW-0819">tRNA processing</keyword>
<name>TRMD_ACIB3</name>
<proteinExistence type="inferred from homology"/>
<dbReference type="EC" id="2.1.1.228" evidence="1"/>
<dbReference type="EMBL" id="CP001172">
    <property type="protein sequence ID" value="ACJ56434.1"/>
    <property type="molecule type" value="Genomic_DNA"/>
</dbReference>
<dbReference type="RefSeq" id="WP_000464595.1">
    <property type="nucleotide sequence ID" value="NZ_CP001172.1"/>
</dbReference>
<dbReference type="SMR" id="B7GVS0"/>
<dbReference type="HOGENOM" id="CLU_047363_0_1_6"/>
<dbReference type="Proteomes" id="UP000006924">
    <property type="component" value="Chromosome"/>
</dbReference>
<dbReference type="GO" id="GO:0005829">
    <property type="term" value="C:cytosol"/>
    <property type="evidence" value="ECO:0007669"/>
    <property type="project" value="TreeGrafter"/>
</dbReference>
<dbReference type="GO" id="GO:0052906">
    <property type="term" value="F:tRNA (guanine(37)-N1)-methyltransferase activity"/>
    <property type="evidence" value="ECO:0007669"/>
    <property type="project" value="UniProtKB-UniRule"/>
</dbReference>
<dbReference type="GO" id="GO:0002939">
    <property type="term" value="P:tRNA N1-guanine methylation"/>
    <property type="evidence" value="ECO:0007669"/>
    <property type="project" value="TreeGrafter"/>
</dbReference>
<dbReference type="CDD" id="cd18080">
    <property type="entry name" value="TrmD-like"/>
    <property type="match status" value="1"/>
</dbReference>
<dbReference type="FunFam" id="1.10.1270.20:FF:000001">
    <property type="entry name" value="tRNA (guanine-N(1)-)-methyltransferase"/>
    <property type="match status" value="1"/>
</dbReference>
<dbReference type="FunFam" id="3.40.1280.10:FF:000001">
    <property type="entry name" value="tRNA (guanine-N(1)-)-methyltransferase"/>
    <property type="match status" value="1"/>
</dbReference>
<dbReference type="Gene3D" id="3.40.1280.10">
    <property type="match status" value="1"/>
</dbReference>
<dbReference type="Gene3D" id="1.10.1270.20">
    <property type="entry name" value="tRNA(m1g37)methyltransferase, domain 2"/>
    <property type="match status" value="1"/>
</dbReference>
<dbReference type="HAMAP" id="MF_00605">
    <property type="entry name" value="TrmD"/>
    <property type="match status" value="1"/>
</dbReference>
<dbReference type="InterPro" id="IPR029028">
    <property type="entry name" value="Alpha/beta_knot_MTases"/>
</dbReference>
<dbReference type="InterPro" id="IPR023148">
    <property type="entry name" value="tRNA_m1G_MeTrfase_C_sf"/>
</dbReference>
<dbReference type="InterPro" id="IPR002649">
    <property type="entry name" value="tRNA_m1G_MeTrfase_TrmD"/>
</dbReference>
<dbReference type="InterPro" id="IPR029026">
    <property type="entry name" value="tRNA_m1G_MTases_N"/>
</dbReference>
<dbReference type="InterPro" id="IPR016009">
    <property type="entry name" value="tRNA_MeTrfase_TRMD/TRM10"/>
</dbReference>
<dbReference type="NCBIfam" id="NF000648">
    <property type="entry name" value="PRK00026.1"/>
    <property type="match status" value="1"/>
</dbReference>
<dbReference type="NCBIfam" id="TIGR00088">
    <property type="entry name" value="trmD"/>
    <property type="match status" value="1"/>
</dbReference>
<dbReference type="PANTHER" id="PTHR46417">
    <property type="entry name" value="TRNA (GUANINE-N(1)-)-METHYLTRANSFERASE"/>
    <property type="match status" value="1"/>
</dbReference>
<dbReference type="PANTHER" id="PTHR46417:SF1">
    <property type="entry name" value="TRNA (GUANINE-N(1)-)-METHYLTRANSFERASE"/>
    <property type="match status" value="1"/>
</dbReference>
<dbReference type="Pfam" id="PF01746">
    <property type="entry name" value="tRNA_m1G_MT"/>
    <property type="match status" value="1"/>
</dbReference>
<dbReference type="PIRSF" id="PIRSF000386">
    <property type="entry name" value="tRNA_mtase"/>
    <property type="match status" value="1"/>
</dbReference>
<dbReference type="SUPFAM" id="SSF75217">
    <property type="entry name" value="alpha/beta knot"/>
    <property type="match status" value="1"/>
</dbReference>
<accession>B7GVS0</accession>
<gene>
    <name evidence="1" type="primary">trmD</name>
    <name type="ordered locus">ABBFA_000350</name>
</gene>
<sequence>MFFAVITLFPEMFDAITAYGISGRAAKRDIVQVTCINPRDFAEGNYRRVDERPFGGGPGMVMMAEPLAKAINHAKQLASRAGCVHVPVVYMSPQGKTLNEQAVQQFVDYDGLIVLCGRYEGVDERLIQHYVDQEWSIGDYVLSGGELPAMVLLDSIIRRLPNVMSDEQSAIQDSFVDGLLDCPQYTKPDQFEGLDVPEILKSGHHANIEKWRFLQRYQRTLERRPELIEQVTLTKQQKKWLSDEQG</sequence>